<accession>P58608</accession>
<dbReference type="PDB" id="1LMR">
    <property type="method" value="NMR"/>
    <property type="chains" value="A=1-35"/>
</dbReference>
<dbReference type="PDBsum" id="1LMR"/>
<dbReference type="SMR" id="P58608"/>
<dbReference type="EvolutionaryTrace" id="P58608"/>
<dbReference type="GO" id="GO:0005576">
    <property type="term" value="C:extracellular region"/>
    <property type="evidence" value="ECO:0007669"/>
    <property type="project" value="UniProtKB-SubCell"/>
</dbReference>
<dbReference type="GO" id="GO:0019855">
    <property type="term" value="F:calcium channel inhibitor activity"/>
    <property type="evidence" value="ECO:0007669"/>
    <property type="project" value="InterPro"/>
</dbReference>
<dbReference type="GO" id="GO:0090729">
    <property type="term" value="F:toxin activity"/>
    <property type="evidence" value="ECO:0007669"/>
    <property type="project" value="UniProtKB-KW"/>
</dbReference>
<dbReference type="InterPro" id="IPR012325">
    <property type="entry name" value="Assassin_bug_toxin-like"/>
</dbReference>
<dbReference type="Pfam" id="PF08117">
    <property type="entry name" value="Toxin_30"/>
    <property type="match status" value="1"/>
</dbReference>
<dbReference type="SUPFAM" id="SSF57059">
    <property type="entry name" value="omega toxin-like"/>
    <property type="match status" value="1"/>
</dbReference>
<dbReference type="PROSITE" id="PS60010">
    <property type="entry name" value="ASSASSIN_BUG_TOXIN"/>
    <property type="match status" value="1"/>
</dbReference>
<proteinExistence type="evidence at protein level"/>
<keyword id="KW-0002">3D-structure</keyword>
<keyword id="KW-0108">Calcium channel impairing toxin</keyword>
<keyword id="KW-0903">Direct protein sequencing</keyword>
<keyword id="KW-1015">Disulfide bond</keyword>
<keyword id="KW-0872">Ion channel impairing toxin</keyword>
<keyword id="KW-0960">Knottin</keyword>
<keyword id="KW-0528">Neurotoxin</keyword>
<keyword id="KW-0964">Secreted</keyword>
<keyword id="KW-0800">Toxin</keyword>
<keyword id="KW-1218">Voltage-gated calcium channel impairing toxin</keyword>
<sequence length="35" mass="3787">ADDDCLPRGSKCLGENKQCCKGTTCMFYANRCVGV</sequence>
<comment type="function">
    <text evidence="2">Binds reversibly and blocks P/Q-type voltage-gated calcium channels (Cav).</text>
</comment>
<comment type="subcellular location">
    <subcellularLocation>
        <location evidence="1">Secreted</location>
    </subcellularLocation>
</comment>
<comment type="domain">
    <text evidence="4">The presence of a 'disulfide through disulfide knot' structurally defines this protein as a knottin.</text>
</comment>
<comment type="mass spectrometry" mass="3781.3" method="MALDI" evidence="1"/>
<comment type="similarity">
    <text evidence="4">Belongs to the venom Ptu1-like knottin family.</text>
</comment>
<name>PLK1_AGRDO</name>
<reference key="1">
    <citation type="journal article" date="2001" name="FEBS Lett.">
        <title>Novel peptides from assassin bugs (Hemiptera: Reduviidae): isolation, chemical and biological characterization.</title>
        <authorList>
            <person name="Corzo G."/>
            <person name="Adachi-Akahane S."/>
            <person name="Nagao T."/>
            <person name="Kusui Y."/>
            <person name="Nakajima T."/>
        </authorList>
    </citation>
    <scope>PROTEIN SEQUENCE</scope>
    <scope>MASS SPECTROMETRY</scope>
    <scope>SUBCELLULAR LOCATION</scope>
    <source>
        <tissue>Saliva</tissue>
    </source>
</reference>
<reference key="2">
    <citation type="journal article" date="2004" name="Proteins">
        <title>Solution structure of ADO1, a toxin extracted from the saliva of the assassin bug, Agriosphodrus dohrni.</title>
        <authorList>
            <person name="Bernard C."/>
            <person name="Corzo G."/>
            <person name="Adachi-Akahane S."/>
            <person name="Foures G."/>
            <person name="Kanemaru K."/>
            <person name="Furukawa Y."/>
            <person name="Nakajima T."/>
            <person name="Darbon H."/>
        </authorList>
    </citation>
    <scope>STRUCTURE BY NMR</scope>
    <scope>FUNCTION</scope>
    <scope>DISULFIDE BOND</scope>
</reference>
<protein>
    <recommendedName>
        <fullName evidence="3">Toxin Ado1</fullName>
    </recommendedName>
</protein>
<feature type="peptide" id="PRO_0000044889" description="Toxin Ado1" evidence="1">
    <location>
        <begin position="1"/>
        <end position="35"/>
    </location>
</feature>
<feature type="disulfide bond" evidence="2 5">
    <location>
        <begin position="5"/>
        <end position="20"/>
    </location>
</feature>
<feature type="disulfide bond" evidence="2 5">
    <location>
        <begin position="12"/>
        <end position="25"/>
    </location>
</feature>
<feature type="disulfide bond" evidence="2 5">
    <location>
        <begin position="19"/>
        <end position="32"/>
    </location>
</feature>
<feature type="strand" evidence="6">
    <location>
        <begin position="23"/>
        <end position="26"/>
    </location>
</feature>
<feature type="turn" evidence="6">
    <location>
        <begin position="27"/>
        <end position="30"/>
    </location>
</feature>
<feature type="strand" evidence="6">
    <location>
        <begin position="31"/>
        <end position="34"/>
    </location>
</feature>
<evidence type="ECO:0000269" key="1">
    <source>
    </source>
</evidence>
<evidence type="ECO:0000269" key="2">
    <source>
    </source>
</evidence>
<evidence type="ECO:0000303" key="3">
    <source>
    </source>
</evidence>
<evidence type="ECO:0000305" key="4"/>
<evidence type="ECO:0007744" key="5">
    <source>
        <dbReference type="PDB" id="1LMR"/>
    </source>
</evidence>
<evidence type="ECO:0007829" key="6">
    <source>
        <dbReference type="PDB" id="1LMR"/>
    </source>
</evidence>
<organism>
    <name type="scientific">Agriosphodrus dohrni</name>
    <name type="common">Japanese assassin-bug</name>
    <dbReference type="NCBI Taxonomy" id="184613"/>
    <lineage>
        <taxon>Eukaryota</taxon>
        <taxon>Metazoa</taxon>
        <taxon>Ecdysozoa</taxon>
        <taxon>Arthropoda</taxon>
        <taxon>Hexapoda</taxon>
        <taxon>Insecta</taxon>
        <taxon>Pterygota</taxon>
        <taxon>Neoptera</taxon>
        <taxon>Paraneoptera</taxon>
        <taxon>Hemiptera</taxon>
        <taxon>Heteroptera</taxon>
        <taxon>Panheteroptera</taxon>
        <taxon>Cimicomorpha</taxon>
        <taxon>Reduviidae</taxon>
        <taxon>Harpactorinae</taxon>
        <taxon>Harpactorini</taxon>
        <taxon>Agriosphodrus</taxon>
    </lineage>
</organism>